<accession>B1LCF9</accession>
<keyword id="KW-0963">Cytoplasm</keyword>
<keyword id="KW-0489">Methyltransferase</keyword>
<keyword id="KW-0698">rRNA processing</keyword>
<keyword id="KW-0949">S-adenosyl-L-methionine</keyword>
<keyword id="KW-0808">Transferase</keyword>
<name>RSMH_THESQ</name>
<protein>
    <recommendedName>
        <fullName evidence="1">Ribosomal RNA small subunit methyltransferase H</fullName>
        <ecNumber evidence="1">2.1.1.199</ecNumber>
    </recommendedName>
    <alternativeName>
        <fullName evidence="1">16S rRNA m(4)C1402 methyltransferase</fullName>
    </alternativeName>
    <alternativeName>
        <fullName evidence="1">rRNA (cytosine-N(4)-)-methyltransferase RsmH</fullName>
    </alternativeName>
</protein>
<sequence length="299" mass="34864">MRKYSQRHIPVMVREVIEFLKPEDEKIILDCTVGEGGHSRAILEHCPGCRIIGIDVDSEVLRIAEEKLKEFSDRASLFKISYREADFLLKTLGVEKVDGILMDLGVSTYQLKGENRGFTFEREEPLDMRMDLESEVTAQKVLNELPEEELARIIFEYGEEKKFARRIARKIVENRPLNTTLDLVKAVREALPSYEIRRRKRHFATKTFQAIRIYVNRELENLKEFLRKAEDLLNPGGRIVVISFHSLEDRIVKETFRNSKKLRILTEKPVRPSEEEIRENPRARSGRLRAAERIEKGGD</sequence>
<proteinExistence type="inferred from homology"/>
<comment type="function">
    <text evidence="1">Specifically methylates the N4 position of cytidine in position 1402 (C1402) of 16S rRNA.</text>
</comment>
<comment type="catalytic activity">
    <reaction evidence="1">
        <text>cytidine(1402) in 16S rRNA + S-adenosyl-L-methionine = N(4)-methylcytidine(1402) in 16S rRNA + S-adenosyl-L-homocysteine + H(+)</text>
        <dbReference type="Rhea" id="RHEA:42928"/>
        <dbReference type="Rhea" id="RHEA-COMP:10286"/>
        <dbReference type="Rhea" id="RHEA-COMP:10287"/>
        <dbReference type="ChEBI" id="CHEBI:15378"/>
        <dbReference type="ChEBI" id="CHEBI:57856"/>
        <dbReference type="ChEBI" id="CHEBI:59789"/>
        <dbReference type="ChEBI" id="CHEBI:74506"/>
        <dbReference type="ChEBI" id="CHEBI:82748"/>
        <dbReference type="EC" id="2.1.1.199"/>
    </reaction>
</comment>
<comment type="subcellular location">
    <subcellularLocation>
        <location evidence="1">Cytoplasm</location>
    </subcellularLocation>
</comment>
<comment type="similarity">
    <text evidence="1">Belongs to the methyltransferase superfamily. RsmH family.</text>
</comment>
<feature type="chain" id="PRO_0000387196" description="Ribosomal RNA small subunit methyltransferase H">
    <location>
        <begin position="1"/>
        <end position="299"/>
    </location>
</feature>
<feature type="region of interest" description="Disordered" evidence="2">
    <location>
        <begin position="268"/>
        <end position="299"/>
    </location>
</feature>
<feature type="compositionally biased region" description="Basic and acidic residues" evidence="2">
    <location>
        <begin position="268"/>
        <end position="282"/>
    </location>
</feature>
<feature type="compositionally biased region" description="Basic and acidic residues" evidence="2">
    <location>
        <begin position="289"/>
        <end position="299"/>
    </location>
</feature>
<feature type="binding site" evidence="1">
    <location>
        <begin position="36"/>
        <end position="38"/>
    </location>
    <ligand>
        <name>S-adenosyl-L-methionine</name>
        <dbReference type="ChEBI" id="CHEBI:59789"/>
    </ligand>
</feature>
<feature type="binding site" evidence="1">
    <location>
        <position position="55"/>
    </location>
    <ligand>
        <name>S-adenosyl-L-methionine</name>
        <dbReference type="ChEBI" id="CHEBI:59789"/>
    </ligand>
</feature>
<feature type="binding site" evidence="1">
    <location>
        <position position="103"/>
    </location>
    <ligand>
        <name>S-adenosyl-L-methionine</name>
        <dbReference type="ChEBI" id="CHEBI:59789"/>
    </ligand>
</feature>
<feature type="binding site" evidence="1">
    <location>
        <position position="110"/>
    </location>
    <ligand>
        <name>S-adenosyl-L-methionine</name>
        <dbReference type="ChEBI" id="CHEBI:59789"/>
    </ligand>
</feature>
<evidence type="ECO:0000255" key="1">
    <source>
        <dbReference type="HAMAP-Rule" id="MF_01007"/>
    </source>
</evidence>
<evidence type="ECO:0000256" key="2">
    <source>
        <dbReference type="SAM" id="MobiDB-lite"/>
    </source>
</evidence>
<organism>
    <name type="scientific">Thermotoga sp. (strain RQ2)</name>
    <dbReference type="NCBI Taxonomy" id="126740"/>
    <lineage>
        <taxon>Bacteria</taxon>
        <taxon>Thermotogati</taxon>
        <taxon>Thermotogota</taxon>
        <taxon>Thermotogae</taxon>
        <taxon>Thermotogales</taxon>
        <taxon>Thermotogaceae</taxon>
        <taxon>Thermotoga</taxon>
    </lineage>
</organism>
<reference key="1">
    <citation type="journal article" date="2011" name="J. Bacteriol.">
        <title>Genome sequence of Thermotoga sp. strain RQ2, a hyperthermophilic bacterium isolated from a geothermally heated region of the seafloor near Ribeira Quente, the Azores.</title>
        <authorList>
            <person name="Swithers K.S."/>
            <person name="DiPippo J.L."/>
            <person name="Bruce D.C."/>
            <person name="Detter C."/>
            <person name="Tapia R."/>
            <person name="Han S."/>
            <person name="Saunders E."/>
            <person name="Goodwin L.A."/>
            <person name="Han J."/>
            <person name="Woyke T."/>
            <person name="Pitluck S."/>
            <person name="Pennacchio L."/>
            <person name="Nolan M."/>
            <person name="Mikhailova N."/>
            <person name="Lykidis A."/>
            <person name="Land M.L."/>
            <person name="Brettin T."/>
            <person name="Stetter K.O."/>
            <person name="Nelson K.E."/>
            <person name="Gogarten J.P."/>
            <person name="Noll K.M."/>
        </authorList>
    </citation>
    <scope>NUCLEOTIDE SEQUENCE [LARGE SCALE GENOMIC DNA]</scope>
    <source>
        <strain>RQ2</strain>
    </source>
</reference>
<gene>
    <name evidence="1" type="primary">rsmH</name>
    <name type="synonym">mraW</name>
    <name type="ordered locus">TRQ2_0055</name>
</gene>
<dbReference type="EC" id="2.1.1.199" evidence="1"/>
<dbReference type="EMBL" id="CP000969">
    <property type="protein sequence ID" value="ACB08417.1"/>
    <property type="molecule type" value="Genomic_DNA"/>
</dbReference>
<dbReference type="RefSeq" id="WP_012310290.1">
    <property type="nucleotide sequence ID" value="NC_010483.1"/>
</dbReference>
<dbReference type="SMR" id="B1LCF9"/>
<dbReference type="KEGG" id="trq:TRQ2_0055"/>
<dbReference type="HOGENOM" id="CLU_038422_3_0_0"/>
<dbReference type="Proteomes" id="UP000001687">
    <property type="component" value="Chromosome"/>
</dbReference>
<dbReference type="GO" id="GO:0005737">
    <property type="term" value="C:cytoplasm"/>
    <property type="evidence" value="ECO:0007669"/>
    <property type="project" value="UniProtKB-SubCell"/>
</dbReference>
<dbReference type="GO" id="GO:0071424">
    <property type="term" value="F:rRNA (cytosine-N4-)-methyltransferase activity"/>
    <property type="evidence" value="ECO:0007669"/>
    <property type="project" value="UniProtKB-UniRule"/>
</dbReference>
<dbReference type="GO" id="GO:0070475">
    <property type="term" value="P:rRNA base methylation"/>
    <property type="evidence" value="ECO:0007669"/>
    <property type="project" value="UniProtKB-UniRule"/>
</dbReference>
<dbReference type="CDD" id="cd02440">
    <property type="entry name" value="AdoMet_MTases"/>
    <property type="match status" value="1"/>
</dbReference>
<dbReference type="Gene3D" id="1.10.150.170">
    <property type="entry name" value="Putative methyltransferase TM0872, insert domain"/>
    <property type="match status" value="1"/>
</dbReference>
<dbReference type="Gene3D" id="3.40.50.150">
    <property type="entry name" value="Vaccinia Virus protein VP39"/>
    <property type="match status" value="1"/>
</dbReference>
<dbReference type="HAMAP" id="MF_01007">
    <property type="entry name" value="16SrRNA_methyltr_H"/>
    <property type="match status" value="1"/>
</dbReference>
<dbReference type="InterPro" id="IPR002903">
    <property type="entry name" value="RsmH"/>
</dbReference>
<dbReference type="InterPro" id="IPR023397">
    <property type="entry name" value="SAM-dep_MeTrfase_MraW_recog"/>
</dbReference>
<dbReference type="InterPro" id="IPR029063">
    <property type="entry name" value="SAM-dependent_MTases_sf"/>
</dbReference>
<dbReference type="NCBIfam" id="TIGR00006">
    <property type="entry name" value="16S rRNA (cytosine(1402)-N(4))-methyltransferase RsmH"/>
    <property type="match status" value="1"/>
</dbReference>
<dbReference type="PANTHER" id="PTHR11265:SF0">
    <property type="entry name" value="12S RRNA N4-METHYLCYTIDINE METHYLTRANSFERASE"/>
    <property type="match status" value="1"/>
</dbReference>
<dbReference type="PANTHER" id="PTHR11265">
    <property type="entry name" value="S-ADENOSYL-METHYLTRANSFERASE MRAW"/>
    <property type="match status" value="1"/>
</dbReference>
<dbReference type="Pfam" id="PF01795">
    <property type="entry name" value="Methyltransf_5"/>
    <property type="match status" value="1"/>
</dbReference>
<dbReference type="PIRSF" id="PIRSF004486">
    <property type="entry name" value="MraW"/>
    <property type="match status" value="1"/>
</dbReference>
<dbReference type="SUPFAM" id="SSF81799">
    <property type="entry name" value="Putative methyltransferase TM0872, insert domain"/>
    <property type="match status" value="1"/>
</dbReference>
<dbReference type="SUPFAM" id="SSF53335">
    <property type="entry name" value="S-adenosyl-L-methionine-dependent methyltransferases"/>
    <property type="match status" value="1"/>
</dbReference>